<comment type="function">
    <text evidence="1">Functions in the N-end rule pathway of protein degradation where it conjugates Leu, Phe and, less efficiently, Met from aminoacyl-tRNAs to the N-termini of proteins containing an N-terminal arginine or lysine.</text>
</comment>
<comment type="catalytic activity">
    <reaction evidence="1">
        <text>N-terminal L-lysyl-[protein] + L-leucyl-tRNA(Leu) = N-terminal L-leucyl-L-lysyl-[protein] + tRNA(Leu) + H(+)</text>
        <dbReference type="Rhea" id="RHEA:12340"/>
        <dbReference type="Rhea" id="RHEA-COMP:9613"/>
        <dbReference type="Rhea" id="RHEA-COMP:9622"/>
        <dbReference type="Rhea" id="RHEA-COMP:12670"/>
        <dbReference type="Rhea" id="RHEA-COMP:12671"/>
        <dbReference type="ChEBI" id="CHEBI:15378"/>
        <dbReference type="ChEBI" id="CHEBI:65249"/>
        <dbReference type="ChEBI" id="CHEBI:78442"/>
        <dbReference type="ChEBI" id="CHEBI:78494"/>
        <dbReference type="ChEBI" id="CHEBI:133043"/>
        <dbReference type="EC" id="2.3.2.6"/>
    </reaction>
</comment>
<comment type="catalytic activity">
    <reaction evidence="1">
        <text>N-terminal L-arginyl-[protein] + L-leucyl-tRNA(Leu) = N-terminal L-leucyl-L-arginyl-[protein] + tRNA(Leu) + H(+)</text>
        <dbReference type="Rhea" id="RHEA:50416"/>
        <dbReference type="Rhea" id="RHEA-COMP:9613"/>
        <dbReference type="Rhea" id="RHEA-COMP:9622"/>
        <dbReference type="Rhea" id="RHEA-COMP:12672"/>
        <dbReference type="Rhea" id="RHEA-COMP:12673"/>
        <dbReference type="ChEBI" id="CHEBI:15378"/>
        <dbReference type="ChEBI" id="CHEBI:64719"/>
        <dbReference type="ChEBI" id="CHEBI:78442"/>
        <dbReference type="ChEBI" id="CHEBI:78494"/>
        <dbReference type="ChEBI" id="CHEBI:133044"/>
        <dbReference type="EC" id="2.3.2.6"/>
    </reaction>
</comment>
<comment type="catalytic activity">
    <reaction evidence="1">
        <text>L-phenylalanyl-tRNA(Phe) + an N-terminal L-alpha-aminoacyl-[protein] = an N-terminal L-phenylalanyl-L-alpha-aminoacyl-[protein] + tRNA(Phe)</text>
        <dbReference type="Rhea" id="RHEA:43632"/>
        <dbReference type="Rhea" id="RHEA-COMP:9668"/>
        <dbReference type="Rhea" id="RHEA-COMP:9699"/>
        <dbReference type="Rhea" id="RHEA-COMP:10636"/>
        <dbReference type="Rhea" id="RHEA-COMP:10637"/>
        <dbReference type="ChEBI" id="CHEBI:78442"/>
        <dbReference type="ChEBI" id="CHEBI:78531"/>
        <dbReference type="ChEBI" id="CHEBI:78597"/>
        <dbReference type="ChEBI" id="CHEBI:83561"/>
        <dbReference type="EC" id="2.3.2.6"/>
    </reaction>
</comment>
<comment type="subcellular location">
    <subcellularLocation>
        <location evidence="1">Cytoplasm</location>
    </subcellularLocation>
</comment>
<comment type="similarity">
    <text evidence="1">Belongs to the L/F-transferase family.</text>
</comment>
<comment type="sequence caution" evidence="2">
    <conflict type="erroneous initiation">
        <sequence resource="EMBL-CDS" id="CAG75552"/>
    </conflict>
</comment>
<organism>
    <name type="scientific">Pectobacterium atrosepticum (strain SCRI 1043 / ATCC BAA-672)</name>
    <name type="common">Erwinia carotovora subsp. atroseptica</name>
    <dbReference type="NCBI Taxonomy" id="218491"/>
    <lineage>
        <taxon>Bacteria</taxon>
        <taxon>Pseudomonadati</taxon>
        <taxon>Pseudomonadota</taxon>
        <taxon>Gammaproteobacteria</taxon>
        <taxon>Enterobacterales</taxon>
        <taxon>Pectobacteriaceae</taxon>
        <taxon>Pectobacterium</taxon>
    </lineage>
</organism>
<protein>
    <recommendedName>
        <fullName evidence="1">Leucyl/phenylalanyl-tRNA--protein transferase</fullName>
        <ecNumber evidence="1">2.3.2.6</ecNumber>
    </recommendedName>
    <alternativeName>
        <fullName evidence="1">L/F-transferase</fullName>
    </alternativeName>
    <alternativeName>
        <fullName evidence="1">Leucyltransferase</fullName>
    </alternativeName>
    <alternativeName>
        <fullName evidence="1">Phenyalanyltransferase</fullName>
    </alternativeName>
</protein>
<keyword id="KW-0012">Acyltransferase</keyword>
<keyword id="KW-0963">Cytoplasm</keyword>
<keyword id="KW-1185">Reference proteome</keyword>
<keyword id="KW-0808">Transferase</keyword>
<evidence type="ECO:0000255" key="1">
    <source>
        <dbReference type="HAMAP-Rule" id="MF_00688"/>
    </source>
</evidence>
<evidence type="ECO:0000305" key="2"/>
<name>LFTR_PECAS</name>
<dbReference type="EC" id="2.3.2.6" evidence="1"/>
<dbReference type="EMBL" id="BX950851">
    <property type="protein sequence ID" value="CAG75552.1"/>
    <property type="status" value="ALT_INIT"/>
    <property type="molecule type" value="Genomic_DNA"/>
</dbReference>
<dbReference type="RefSeq" id="WP_043878063.1">
    <property type="nucleotide sequence ID" value="NC_004547.2"/>
</dbReference>
<dbReference type="SMR" id="Q6D3U2"/>
<dbReference type="STRING" id="218491.ECA2652"/>
<dbReference type="KEGG" id="eca:ECA2652"/>
<dbReference type="PATRIC" id="fig|218491.5.peg.2686"/>
<dbReference type="eggNOG" id="COG2360">
    <property type="taxonomic scope" value="Bacteria"/>
</dbReference>
<dbReference type="HOGENOM" id="CLU_075045_0_0_6"/>
<dbReference type="OrthoDB" id="9790282at2"/>
<dbReference type="Proteomes" id="UP000007966">
    <property type="component" value="Chromosome"/>
</dbReference>
<dbReference type="GO" id="GO:0005737">
    <property type="term" value="C:cytoplasm"/>
    <property type="evidence" value="ECO:0007669"/>
    <property type="project" value="UniProtKB-SubCell"/>
</dbReference>
<dbReference type="GO" id="GO:0008914">
    <property type="term" value="F:leucyl-tRNA--protein transferase activity"/>
    <property type="evidence" value="ECO:0007669"/>
    <property type="project" value="UniProtKB-UniRule"/>
</dbReference>
<dbReference type="GO" id="GO:0030163">
    <property type="term" value="P:protein catabolic process"/>
    <property type="evidence" value="ECO:0007669"/>
    <property type="project" value="UniProtKB-UniRule"/>
</dbReference>
<dbReference type="FunFam" id="3.30.70.3550:FF:000001">
    <property type="entry name" value="Leucyl/phenylalanyl-tRNA--protein transferase"/>
    <property type="match status" value="1"/>
</dbReference>
<dbReference type="FunFam" id="3.40.630.70:FF:000001">
    <property type="entry name" value="Leucyl/phenylalanyl-tRNA--protein transferase"/>
    <property type="match status" value="1"/>
</dbReference>
<dbReference type="Gene3D" id="3.40.630.70">
    <property type="entry name" value="Leucyl/phenylalanyl-tRNA-protein transferase, C-terminal domain"/>
    <property type="match status" value="1"/>
</dbReference>
<dbReference type="Gene3D" id="3.30.70.3550">
    <property type="entry name" value="Leucyl/phenylalanyl-tRNA-protein transferase, N-terminal domain"/>
    <property type="match status" value="1"/>
</dbReference>
<dbReference type="HAMAP" id="MF_00688">
    <property type="entry name" value="Leu_Phe_trans"/>
    <property type="match status" value="1"/>
</dbReference>
<dbReference type="InterPro" id="IPR016181">
    <property type="entry name" value="Acyl_CoA_acyltransferase"/>
</dbReference>
<dbReference type="InterPro" id="IPR004616">
    <property type="entry name" value="Leu/Phe-tRNA_Trfase"/>
</dbReference>
<dbReference type="InterPro" id="IPR042203">
    <property type="entry name" value="Leu/Phe-tRNA_Trfase_C"/>
</dbReference>
<dbReference type="InterPro" id="IPR042221">
    <property type="entry name" value="Leu/Phe-tRNA_Trfase_N"/>
</dbReference>
<dbReference type="NCBIfam" id="TIGR00667">
    <property type="entry name" value="aat"/>
    <property type="match status" value="1"/>
</dbReference>
<dbReference type="PANTHER" id="PTHR30098">
    <property type="entry name" value="LEUCYL/PHENYLALANYL-TRNA--PROTEIN TRANSFERASE"/>
    <property type="match status" value="1"/>
</dbReference>
<dbReference type="PANTHER" id="PTHR30098:SF2">
    <property type="entry name" value="LEUCYL_PHENYLALANYL-TRNA--PROTEIN TRANSFERASE"/>
    <property type="match status" value="1"/>
</dbReference>
<dbReference type="Pfam" id="PF03588">
    <property type="entry name" value="Leu_Phe_trans"/>
    <property type="match status" value="1"/>
</dbReference>
<dbReference type="SUPFAM" id="SSF55729">
    <property type="entry name" value="Acyl-CoA N-acyltransferases (Nat)"/>
    <property type="match status" value="1"/>
</dbReference>
<accession>Q6D3U2</accession>
<sequence length="234" mass="26403">MRLYQLSPQSLQFPDPNHALDNPNGLLAVGGDLSVARLKVAYRQGIFPWFSPGEPILWWSPNPRAVLLPGELHLSRSMKKFLKRHTFHATLNQAFDDVIHACAQEHHDGTWITPDIISAYRQLHQVGKAHSVEVWHNGALVGGLYGIEQGRLFCGESMFSRMDNASKYALLAFQQHFIRHGGHLIDCQVLNSHTASLGVSEIPRVRFLQQLSQWQDIAVEEGCWLPQQLAEPAF</sequence>
<feature type="chain" id="PRO_0000207220" description="Leucyl/phenylalanyl-tRNA--protein transferase">
    <location>
        <begin position="1"/>
        <end position="234"/>
    </location>
</feature>
<reference key="1">
    <citation type="journal article" date="2004" name="Proc. Natl. Acad. Sci. U.S.A.">
        <title>Genome sequence of the enterobacterial phytopathogen Erwinia carotovora subsp. atroseptica and characterization of virulence factors.</title>
        <authorList>
            <person name="Bell K.S."/>
            <person name="Sebaihia M."/>
            <person name="Pritchard L."/>
            <person name="Holden M.T.G."/>
            <person name="Hyman L.J."/>
            <person name="Holeva M.C."/>
            <person name="Thomson N.R."/>
            <person name="Bentley S.D."/>
            <person name="Churcher L.J.C."/>
            <person name="Mungall K."/>
            <person name="Atkin R."/>
            <person name="Bason N."/>
            <person name="Brooks K."/>
            <person name="Chillingworth T."/>
            <person name="Clark K."/>
            <person name="Doggett J."/>
            <person name="Fraser A."/>
            <person name="Hance Z."/>
            <person name="Hauser H."/>
            <person name="Jagels K."/>
            <person name="Moule S."/>
            <person name="Norbertczak H."/>
            <person name="Ormond D."/>
            <person name="Price C."/>
            <person name="Quail M.A."/>
            <person name="Sanders M."/>
            <person name="Walker D."/>
            <person name="Whitehead S."/>
            <person name="Salmond G.P.C."/>
            <person name="Birch P.R.J."/>
            <person name="Parkhill J."/>
            <person name="Toth I.K."/>
        </authorList>
    </citation>
    <scope>NUCLEOTIDE SEQUENCE [LARGE SCALE GENOMIC DNA]</scope>
    <source>
        <strain>SCRI 1043 / ATCC BAA-672</strain>
    </source>
</reference>
<gene>
    <name evidence="1" type="primary">aat</name>
    <name type="ordered locus">ECA2652</name>
</gene>
<proteinExistence type="inferred from homology"/>